<proteinExistence type="inferred from homology"/>
<evidence type="ECO:0000250" key="1">
    <source>
        <dbReference type="UniProtKB" id="Q8IN43"/>
    </source>
</evidence>
<evidence type="ECO:0000255" key="2"/>
<evidence type="ECO:0000312" key="3">
    <source>
        <dbReference type="EMBL" id="EDW49601.1"/>
    </source>
</evidence>
<organism>
    <name type="scientific">Drosophila sechellia</name>
    <name type="common">Fruit fly</name>
    <dbReference type="NCBI Taxonomy" id="7238"/>
    <lineage>
        <taxon>Eukaryota</taxon>
        <taxon>Metazoa</taxon>
        <taxon>Ecdysozoa</taxon>
        <taxon>Arthropoda</taxon>
        <taxon>Hexapoda</taxon>
        <taxon>Insecta</taxon>
        <taxon>Pterygota</taxon>
        <taxon>Neoptera</taxon>
        <taxon>Endopterygota</taxon>
        <taxon>Diptera</taxon>
        <taxon>Brachycera</taxon>
        <taxon>Muscomorpha</taxon>
        <taxon>Ephydroidea</taxon>
        <taxon>Drosophilidae</taxon>
        <taxon>Drosophila</taxon>
        <taxon>Sophophora</taxon>
    </lineage>
</organism>
<sequence length="129" mass="14345">MNASISLLCFALLLISPFCLGYSDEERESDSLRVAEILQTSKDDESKINRTQELLDIFRRLAPSLSPEDRERIERSIKEHTDEILIDGVPSQGGRKTKYVGKILSPVAQGLAIGFFEELGGSLSRLFTG</sequence>
<accession>B4II57</accession>
<feature type="signal peptide" evidence="2">
    <location>
        <begin position="1"/>
        <end position="21"/>
    </location>
</feature>
<feature type="chain" id="PRO_0000354985" description="Protein Turandot C">
    <location>
        <begin position="22"/>
        <end position="129"/>
    </location>
</feature>
<keyword id="KW-0391">Immunity</keyword>
<keyword id="KW-0399">Innate immunity</keyword>
<keyword id="KW-1185">Reference proteome</keyword>
<keyword id="KW-0964">Secreted</keyword>
<keyword id="KW-0732">Signal</keyword>
<reference evidence="3" key="1">
    <citation type="journal article" date="2007" name="Nature">
        <title>Evolution of genes and genomes on the Drosophila phylogeny.</title>
        <authorList>
            <consortium name="Drosophila 12 genomes consortium"/>
        </authorList>
    </citation>
    <scope>NUCLEOTIDE SEQUENCE [LARGE SCALE GENOMIC DNA]</scope>
    <source>
        <strain evidence="3">Rob3c / Tucson 14021-0248.25</strain>
    </source>
</reference>
<dbReference type="EMBL" id="CH480842">
    <property type="protein sequence ID" value="EDW49601.1"/>
    <property type="molecule type" value="Genomic_DNA"/>
</dbReference>
<dbReference type="SMR" id="B4II57"/>
<dbReference type="STRING" id="7238.B4II57"/>
<dbReference type="EnsemblMetazoa" id="FBtr0206129">
    <property type="protein sequence ID" value="FBpp0204621"/>
    <property type="gene ID" value="FBgn0178012"/>
</dbReference>
<dbReference type="EnsemblMetazoa" id="XM_002043381.2">
    <property type="protein sequence ID" value="XP_002043417.1"/>
    <property type="gene ID" value="LOC6619195"/>
</dbReference>
<dbReference type="GeneID" id="6619195"/>
<dbReference type="KEGG" id="dse:6619195"/>
<dbReference type="HOGENOM" id="CLU_152780_0_0_1"/>
<dbReference type="OMA" id="AYFFQWF"/>
<dbReference type="OrthoDB" id="60450at7215"/>
<dbReference type="PhylomeDB" id="B4II57"/>
<dbReference type="Proteomes" id="UP000001292">
    <property type="component" value="Unassembled WGS sequence"/>
</dbReference>
<dbReference type="GO" id="GO:0005615">
    <property type="term" value="C:extracellular space"/>
    <property type="evidence" value="ECO:0000250"/>
    <property type="project" value="UniProtKB"/>
</dbReference>
<dbReference type="GO" id="GO:0034605">
    <property type="term" value="P:cellular response to heat"/>
    <property type="evidence" value="ECO:0007669"/>
    <property type="project" value="EnsemblMetazoa"/>
</dbReference>
<dbReference type="GO" id="GO:0034644">
    <property type="term" value="P:cellular response to UV"/>
    <property type="evidence" value="ECO:0007669"/>
    <property type="project" value="EnsemblMetazoa"/>
</dbReference>
<dbReference type="GO" id="GO:0045087">
    <property type="term" value="P:innate immune response"/>
    <property type="evidence" value="ECO:0007669"/>
    <property type="project" value="UniProtKB-KW"/>
</dbReference>
<dbReference type="GO" id="GO:0009617">
    <property type="term" value="P:response to bacterium"/>
    <property type="evidence" value="ECO:0007669"/>
    <property type="project" value="EnsemblMetazoa"/>
</dbReference>
<dbReference type="GO" id="GO:0009408">
    <property type="term" value="P:response to heat"/>
    <property type="evidence" value="ECO:0000250"/>
    <property type="project" value="UniProtKB"/>
</dbReference>
<dbReference type="GO" id="GO:0006979">
    <property type="term" value="P:response to oxidative stress"/>
    <property type="evidence" value="ECO:0000250"/>
    <property type="project" value="UniProtKB"/>
</dbReference>
<dbReference type="GO" id="GO:0009411">
    <property type="term" value="P:response to UV"/>
    <property type="evidence" value="ECO:0000250"/>
    <property type="project" value="UniProtKB"/>
</dbReference>
<dbReference type="InterPro" id="IPR010825">
    <property type="entry name" value="Turandot"/>
</dbReference>
<dbReference type="Pfam" id="PF07240">
    <property type="entry name" value="Turandot"/>
    <property type="match status" value="1"/>
</dbReference>
<comment type="function">
    <text evidence="1">A humoral factor that may play a role in stress tolerance.</text>
</comment>
<comment type="subcellular location">
    <subcellularLocation>
        <location evidence="1">Secreted</location>
    </subcellularLocation>
</comment>
<comment type="similarity">
    <text evidence="2">Belongs to the Turandot family.</text>
</comment>
<protein>
    <recommendedName>
        <fullName>Protein Turandot C</fullName>
    </recommendedName>
</protein>
<name>TOTC_DROSE</name>
<gene>
    <name evidence="1" type="primary">TotC</name>
    <name type="ORF">GM23144</name>
</gene>